<gene>
    <name type="primary">Fam161b</name>
</gene>
<keyword id="KW-0025">Alternative splicing</keyword>
<keyword id="KW-0175">Coiled coil</keyword>
<keyword id="KW-1185">Reference proteome</keyword>
<sequence>MTVGRTAGGPECAEWSREIFPPKSSSSDTEPEDEQFGEGLVLPRAGKLHEFLSPEEDTDSTSDSTGSFYRTPQVPKQRGRWDVLESLFQSDPDSDLNDAEDEEDLESFFQDKSRGKPQVQDPPSLRHGSMRRCSSMTSLPSDIPKARILPTSDSGPPSQHRSVCSWASSITVPQPFRMTLREARKKAQWLASPASFEQERLQAQKQGEEEAECHRQFRAQPVPAHVYLPLYQEIMERREARRRAGIRKRKELLLSSLKPFSFLEKKEQQKEDAPQRDSAAVAQTKVSPKKATSRKIPKSILEPALGDKLQEAELLRKIRIQMRAMDTLRMASSPVSTARNRAPRTAARTQEEKLSFLQTEFEFQPKVNPVVPDYEGLYKAFQKRAAERRETRETTRNKPFLLRTANLSHTPRSCDAATAGGGKKSPQPTATPLPRSRSLSGLASFSANTLPVHITDATRKRESAVRMSLEKKDKSDMSIQWLEVHKKNCQAMSKSVTLRAKAMDPHKSLEEVFKAKLKENRSNDRKRAKEYKKELEEMKKRIQTRPYLFEQVTKALARKEAEERYRDALKQAGLEEEFVRTKSQGTEAV</sequence>
<proteinExistence type="evidence at protein level"/>
<reference key="1">
    <citation type="journal article" date="2005" name="Science">
        <title>The transcriptional landscape of the mammalian genome.</title>
        <authorList>
            <person name="Carninci P."/>
            <person name="Kasukawa T."/>
            <person name="Katayama S."/>
            <person name="Gough J."/>
            <person name="Frith M.C."/>
            <person name="Maeda N."/>
            <person name="Oyama R."/>
            <person name="Ravasi T."/>
            <person name="Lenhard B."/>
            <person name="Wells C."/>
            <person name="Kodzius R."/>
            <person name="Shimokawa K."/>
            <person name="Bajic V.B."/>
            <person name="Brenner S.E."/>
            <person name="Batalov S."/>
            <person name="Forrest A.R."/>
            <person name="Zavolan M."/>
            <person name="Davis M.J."/>
            <person name="Wilming L.G."/>
            <person name="Aidinis V."/>
            <person name="Allen J.E."/>
            <person name="Ambesi-Impiombato A."/>
            <person name="Apweiler R."/>
            <person name="Aturaliya R.N."/>
            <person name="Bailey T.L."/>
            <person name="Bansal M."/>
            <person name="Baxter L."/>
            <person name="Beisel K.W."/>
            <person name="Bersano T."/>
            <person name="Bono H."/>
            <person name="Chalk A.M."/>
            <person name="Chiu K.P."/>
            <person name="Choudhary V."/>
            <person name="Christoffels A."/>
            <person name="Clutterbuck D.R."/>
            <person name="Crowe M.L."/>
            <person name="Dalla E."/>
            <person name="Dalrymple B.P."/>
            <person name="de Bono B."/>
            <person name="Della Gatta G."/>
            <person name="di Bernardo D."/>
            <person name="Down T."/>
            <person name="Engstrom P."/>
            <person name="Fagiolini M."/>
            <person name="Faulkner G."/>
            <person name="Fletcher C.F."/>
            <person name="Fukushima T."/>
            <person name="Furuno M."/>
            <person name="Futaki S."/>
            <person name="Gariboldi M."/>
            <person name="Georgii-Hemming P."/>
            <person name="Gingeras T.R."/>
            <person name="Gojobori T."/>
            <person name="Green R.E."/>
            <person name="Gustincich S."/>
            <person name="Harbers M."/>
            <person name="Hayashi Y."/>
            <person name="Hensch T.K."/>
            <person name="Hirokawa N."/>
            <person name="Hill D."/>
            <person name="Huminiecki L."/>
            <person name="Iacono M."/>
            <person name="Ikeo K."/>
            <person name="Iwama A."/>
            <person name="Ishikawa T."/>
            <person name="Jakt M."/>
            <person name="Kanapin A."/>
            <person name="Katoh M."/>
            <person name="Kawasawa Y."/>
            <person name="Kelso J."/>
            <person name="Kitamura H."/>
            <person name="Kitano H."/>
            <person name="Kollias G."/>
            <person name="Krishnan S.P."/>
            <person name="Kruger A."/>
            <person name="Kummerfeld S.K."/>
            <person name="Kurochkin I.V."/>
            <person name="Lareau L.F."/>
            <person name="Lazarevic D."/>
            <person name="Lipovich L."/>
            <person name="Liu J."/>
            <person name="Liuni S."/>
            <person name="McWilliam S."/>
            <person name="Madan Babu M."/>
            <person name="Madera M."/>
            <person name="Marchionni L."/>
            <person name="Matsuda H."/>
            <person name="Matsuzawa S."/>
            <person name="Miki H."/>
            <person name="Mignone F."/>
            <person name="Miyake S."/>
            <person name="Morris K."/>
            <person name="Mottagui-Tabar S."/>
            <person name="Mulder N."/>
            <person name="Nakano N."/>
            <person name="Nakauchi H."/>
            <person name="Ng P."/>
            <person name="Nilsson R."/>
            <person name="Nishiguchi S."/>
            <person name="Nishikawa S."/>
            <person name="Nori F."/>
            <person name="Ohara O."/>
            <person name="Okazaki Y."/>
            <person name="Orlando V."/>
            <person name="Pang K.C."/>
            <person name="Pavan W.J."/>
            <person name="Pavesi G."/>
            <person name="Pesole G."/>
            <person name="Petrovsky N."/>
            <person name="Piazza S."/>
            <person name="Reed J."/>
            <person name="Reid J.F."/>
            <person name="Ring B.Z."/>
            <person name="Ringwald M."/>
            <person name="Rost B."/>
            <person name="Ruan Y."/>
            <person name="Salzberg S.L."/>
            <person name="Sandelin A."/>
            <person name="Schneider C."/>
            <person name="Schoenbach C."/>
            <person name="Sekiguchi K."/>
            <person name="Semple C.A."/>
            <person name="Seno S."/>
            <person name="Sessa L."/>
            <person name="Sheng Y."/>
            <person name="Shibata Y."/>
            <person name="Shimada H."/>
            <person name="Shimada K."/>
            <person name="Silva D."/>
            <person name="Sinclair B."/>
            <person name="Sperling S."/>
            <person name="Stupka E."/>
            <person name="Sugiura K."/>
            <person name="Sultana R."/>
            <person name="Takenaka Y."/>
            <person name="Taki K."/>
            <person name="Tammoja K."/>
            <person name="Tan S.L."/>
            <person name="Tang S."/>
            <person name="Taylor M.S."/>
            <person name="Tegner J."/>
            <person name="Teichmann S.A."/>
            <person name="Ueda H.R."/>
            <person name="van Nimwegen E."/>
            <person name="Verardo R."/>
            <person name="Wei C.L."/>
            <person name="Yagi K."/>
            <person name="Yamanishi H."/>
            <person name="Zabarovsky E."/>
            <person name="Zhu S."/>
            <person name="Zimmer A."/>
            <person name="Hide W."/>
            <person name="Bult C."/>
            <person name="Grimmond S.M."/>
            <person name="Teasdale R.D."/>
            <person name="Liu E.T."/>
            <person name="Brusic V."/>
            <person name="Quackenbush J."/>
            <person name="Wahlestedt C."/>
            <person name="Mattick J.S."/>
            <person name="Hume D.A."/>
            <person name="Kai C."/>
            <person name="Sasaki D."/>
            <person name="Tomaru Y."/>
            <person name="Fukuda S."/>
            <person name="Kanamori-Katayama M."/>
            <person name="Suzuki M."/>
            <person name="Aoki J."/>
            <person name="Arakawa T."/>
            <person name="Iida J."/>
            <person name="Imamura K."/>
            <person name="Itoh M."/>
            <person name="Kato T."/>
            <person name="Kawaji H."/>
            <person name="Kawagashira N."/>
            <person name="Kawashima T."/>
            <person name="Kojima M."/>
            <person name="Kondo S."/>
            <person name="Konno H."/>
            <person name="Nakano K."/>
            <person name="Ninomiya N."/>
            <person name="Nishio T."/>
            <person name="Okada M."/>
            <person name="Plessy C."/>
            <person name="Shibata K."/>
            <person name="Shiraki T."/>
            <person name="Suzuki S."/>
            <person name="Tagami M."/>
            <person name="Waki K."/>
            <person name="Watahiki A."/>
            <person name="Okamura-Oho Y."/>
            <person name="Suzuki H."/>
            <person name="Kawai J."/>
            <person name="Hayashizaki Y."/>
        </authorList>
    </citation>
    <scope>NUCLEOTIDE SEQUENCE [LARGE SCALE MRNA] (ISOFORMS 1 AND 2)</scope>
    <source>
        <strain>C57BL/6J</strain>
        <tissue>Bone</tissue>
        <tissue>Brain</tissue>
        <tissue>Diencephalon</tissue>
        <tissue>Forelimb</tissue>
    </source>
</reference>
<reference key="2">
    <citation type="journal article" date="2004" name="Genome Res.">
        <title>The status, quality, and expansion of the NIH full-length cDNA project: the Mammalian Gene Collection (MGC).</title>
        <authorList>
            <consortium name="The MGC Project Team"/>
        </authorList>
    </citation>
    <scope>NUCLEOTIDE SEQUENCE [LARGE SCALE MRNA] (ISOFORM 1)</scope>
    <source>
        <tissue>Limb</tissue>
    </source>
</reference>
<reference key="3">
    <citation type="journal article" date="2010" name="Cell">
        <title>A tissue-specific atlas of mouse protein phosphorylation and expression.</title>
        <authorList>
            <person name="Huttlin E.L."/>
            <person name="Jedrychowski M.P."/>
            <person name="Elias J.E."/>
            <person name="Goswami T."/>
            <person name="Rad R."/>
            <person name="Beausoleil S.A."/>
            <person name="Villen J."/>
            <person name="Haas W."/>
            <person name="Sowa M.E."/>
            <person name="Gygi S.P."/>
        </authorList>
    </citation>
    <scope>IDENTIFICATION BY MASS SPECTROMETRY [LARGE SCALE ANALYSIS]</scope>
    <source>
        <tissue>Testis</tissue>
    </source>
</reference>
<organism>
    <name type="scientific">Mus musculus</name>
    <name type="common">Mouse</name>
    <dbReference type="NCBI Taxonomy" id="10090"/>
    <lineage>
        <taxon>Eukaryota</taxon>
        <taxon>Metazoa</taxon>
        <taxon>Chordata</taxon>
        <taxon>Craniata</taxon>
        <taxon>Vertebrata</taxon>
        <taxon>Euteleostomi</taxon>
        <taxon>Mammalia</taxon>
        <taxon>Eutheria</taxon>
        <taxon>Euarchontoglires</taxon>
        <taxon>Glires</taxon>
        <taxon>Rodentia</taxon>
        <taxon>Myomorpha</taxon>
        <taxon>Muroidea</taxon>
        <taxon>Muridae</taxon>
        <taxon>Murinae</taxon>
        <taxon>Mus</taxon>
        <taxon>Mus</taxon>
    </lineage>
</organism>
<dbReference type="EMBL" id="AK031252">
    <property type="protein sequence ID" value="BAC27322.1"/>
    <property type="molecule type" value="mRNA"/>
</dbReference>
<dbReference type="EMBL" id="AK034254">
    <property type="protein sequence ID" value="BAC28650.1"/>
    <property type="molecule type" value="mRNA"/>
</dbReference>
<dbReference type="EMBL" id="AK036740">
    <property type="protein sequence ID" value="BAC29559.1"/>
    <property type="molecule type" value="mRNA"/>
</dbReference>
<dbReference type="EMBL" id="AK046195">
    <property type="protein sequence ID" value="BAC32631.1"/>
    <property type="molecule type" value="mRNA"/>
</dbReference>
<dbReference type="EMBL" id="BC062132">
    <property type="protein sequence ID" value="AAH62132.1"/>
    <property type="molecule type" value="mRNA"/>
</dbReference>
<dbReference type="CCDS" id="CCDS26043.1">
    <molecule id="Q8CB59-1"/>
</dbReference>
<dbReference type="RefSeq" id="NP_001345212.1">
    <molecule id="Q8CB59-1"/>
    <property type="nucleotide sequence ID" value="NM_001358283.2"/>
</dbReference>
<dbReference type="RefSeq" id="NP_766169.1">
    <molecule id="Q8CB59-1"/>
    <property type="nucleotide sequence ID" value="NM_172581.4"/>
</dbReference>
<dbReference type="RefSeq" id="XP_006515760.1">
    <property type="nucleotide sequence ID" value="XM_006515697.3"/>
</dbReference>
<dbReference type="SMR" id="Q8CB59"/>
<dbReference type="BioGRID" id="229949">
    <property type="interactions" value="1"/>
</dbReference>
<dbReference type="FunCoup" id="Q8CB59">
    <property type="interactions" value="263"/>
</dbReference>
<dbReference type="STRING" id="10090.ENSMUSP00000021659"/>
<dbReference type="iPTMnet" id="Q8CB59"/>
<dbReference type="PhosphoSitePlus" id="Q8CB59"/>
<dbReference type="PaxDb" id="10090-ENSMUSP00000021659"/>
<dbReference type="ProteomicsDB" id="275713">
    <molecule id="Q8CB59-1"/>
</dbReference>
<dbReference type="ProteomicsDB" id="275714">
    <molecule id="Q8CB59-2"/>
</dbReference>
<dbReference type="Antibodypedia" id="12752">
    <property type="antibodies" value="42 antibodies from 13 providers"/>
</dbReference>
<dbReference type="DNASU" id="217705"/>
<dbReference type="Ensembl" id="ENSMUST00000021659.2">
    <molecule id="Q8CB59-1"/>
    <property type="protein sequence ID" value="ENSMUSP00000021659.2"/>
    <property type="gene ID" value="ENSMUSG00000021234.10"/>
</dbReference>
<dbReference type="Ensembl" id="ENSMUST00000065536.9">
    <molecule id="Q8CB59-1"/>
    <property type="protein sequence ID" value="ENSMUSP00000070407.3"/>
    <property type="gene ID" value="ENSMUSG00000021234.10"/>
</dbReference>
<dbReference type="GeneID" id="217705"/>
<dbReference type="KEGG" id="mmu:217705"/>
<dbReference type="UCSC" id="uc007oez.1">
    <molecule id="Q8CB59-1"/>
    <property type="organism name" value="mouse"/>
</dbReference>
<dbReference type="UCSC" id="uc011yox.1">
    <molecule id="Q8CB59-2"/>
    <property type="organism name" value="mouse"/>
</dbReference>
<dbReference type="AGR" id="MGI:2443027"/>
<dbReference type="CTD" id="145483"/>
<dbReference type="MGI" id="MGI:2443027">
    <property type="gene designation" value="Fam161b"/>
</dbReference>
<dbReference type="VEuPathDB" id="HostDB:ENSMUSG00000021234"/>
<dbReference type="eggNOG" id="ENOG502R2CY">
    <property type="taxonomic scope" value="Eukaryota"/>
</dbReference>
<dbReference type="GeneTree" id="ENSGT00940000159998"/>
<dbReference type="HOGENOM" id="CLU_010955_1_0_1"/>
<dbReference type="InParanoid" id="Q8CB59"/>
<dbReference type="OMA" id="KCQAMHK"/>
<dbReference type="OrthoDB" id="2150121at2759"/>
<dbReference type="PhylomeDB" id="Q8CB59"/>
<dbReference type="TreeFam" id="TF321199"/>
<dbReference type="BioGRID-ORCS" id="217705">
    <property type="hits" value="2 hits in 78 CRISPR screens"/>
</dbReference>
<dbReference type="PRO" id="PR:Q8CB59"/>
<dbReference type="Proteomes" id="UP000000589">
    <property type="component" value="Chromosome 12"/>
</dbReference>
<dbReference type="RNAct" id="Q8CB59">
    <property type="molecule type" value="protein"/>
</dbReference>
<dbReference type="Bgee" id="ENSMUSG00000021234">
    <property type="expression patterns" value="Expressed in spermatocyte and 67 other cell types or tissues"/>
</dbReference>
<dbReference type="GO" id="GO:0005881">
    <property type="term" value="C:cytoplasmic microtubule"/>
    <property type="evidence" value="ECO:0007669"/>
    <property type="project" value="Ensembl"/>
</dbReference>
<dbReference type="InterPro" id="IPR051655">
    <property type="entry name" value="FAM161"/>
</dbReference>
<dbReference type="InterPro" id="IPR019579">
    <property type="entry name" value="FAM161A/B"/>
</dbReference>
<dbReference type="PANTHER" id="PTHR21501">
    <property type="entry name" value="PROTEIN FAM-161"/>
    <property type="match status" value="1"/>
</dbReference>
<dbReference type="PANTHER" id="PTHR21501:SF4">
    <property type="entry name" value="PROTEIN FAM161B"/>
    <property type="match status" value="1"/>
</dbReference>
<dbReference type="Pfam" id="PF10595">
    <property type="entry name" value="FAM161A_B"/>
    <property type="match status" value="1"/>
</dbReference>
<comment type="subunit">
    <text evidence="1">Interacts with FAM161A.</text>
</comment>
<comment type="alternative products">
    <event type="alternative splicing"/>
    <isoform>
        <id>Q8CB59-1</id>
        <name>1</name>
        <sequence type="displayed"/>
    </isoform>
    <isoform>
        <id>Q8CB59-2</id>
        <name>2</name>
        <sequence type="described" ref="VSP_007818 VSP_007819"/>
    </isoform>
</comment>
<comment type="similarity">
    <text evidence="5">Belongs to the FAM161 family.</text>
</comment>
<name>F161B_MOUSE</name>
<feature type="chain" id="PRO_0000089891" description="Protein FAM161B">
    <location>
        <begin position="1"/>
        <end position="589"/>
    </location>
</feature>
<feature type="region of interest" description="Disordered" evidence="3">
    <location>
        <begin position="1"/>
        <end position="166"/>
    </location>
</feature>
<feature type="region of interest" description="Disordered" evidence="3">
    <location>
        <begin position="265"/>
        <end position="297"/>
    </location>
</feature>
<feature type="region of interest" description="Disordered" evidence="3">
    <location>
        <begin position="386"/>
        <end position="444"/>
    </location>
</feature>
<feature type="coiled-coil region" evidence="2">
    <location>
        <begin position="510"/>
        <end position="577"/>
    </location>
</feature>
<feature type="compositionally biased region" description="Acidic residues" evidence="3">
    <location>
        <begin position="92"/>
        <end position="106"/>
    </location>
</feature>
<feature type="compositionally biased region" description="Polar residues" evidence="3">
    <location>
        <begin position="151"/>
        <end position="166"/>
    </location>
</feature>
<feature type="compositionally biased region" description="Basic and acidic residues" evidence="3">
    <location>
        <begin position="265"/>
        <end position="275"/>
    </location>
</feature>
<feature type="compositionally biased region" description="Basic residues" evidence="3">
    <location>
        <begin position="287"/>
        <end position="297"/>
    </location>
</feature>
<feature type="compositionally biased region" description="Basic and acidic residues" evidence="3">
    <location>
        <begin position="386"/>
        <end position="396"/>
    </location>
</feature>
<feature type="splice variant" id="VSP_007818" description="In isoform 2." evidence="4">
    <location>
        <begin position="1"/>
        <end position="102"/>
    </location>
</feature>
<feature type="splice variant" id="VSP_007819" description="In isoform 2." evidence="4">
    <original>EDLESFFQDKSRGKPQVQDPPSL</original>
    <variation>MEEGLWEEPHLLFAGSTQNHSLP</variation>
    <location>
        <begin position="103"/>
        <end position="125"/>
    </location>
</feature>
<feature type="sequence conflict" description="In Ref. 1; BAC28650." evidence="5" ref="1">
    <original>F</original>
    <variation>S</variation>
    <location>
        <position position="196"/>
    </location>
</feature>
<feature type="sequence conflict" description="In Ref. 1; BAC28650." evidence="5" ref="1">
    <original>E</original>
    <variation>K</variation>
    <location>
        <position position="209"/>
    </location>
</feature>
<feature type="sequence conflict" description="In Ref. 1; BAC32631." evidence="5" ref="1">
    <original>Q</original>
    <variation>R</variation>
    <location>
        <position position="268"/>
    </location>
</feature>
<feature type="sequence conflict" description="In Ref. 1; BAC28650." evidence="5" ref="1">
    <original>K</original>
    <variation>N</variation>
    <location>
        <position position="285"/>
    </location>
</feature>
<evidence type="ECO:0000250" key="1"/>
<evidence type="ECO:0000255" key="2"/>
<evidence type="ECO:0000256" key="3">
    <source>
        <dbReference type="SAM" id="MobiDB-lite"/>
    </source>
</evidence>
<evidence type="ECO:0000303" key="4">
    <source>
    </source>
</evidence>
<evidence type="ECO:0000305" key="5"/>
<protein>
    <recommendedName>
        <fullName>Protein FAM161B</fullName>
    </recommendedName>
</protein>
<accession>Q8CB59</accession>
<accession>Q8BQX8</accession>
<accession>Q8BSL9</accession>
<accession>Q8CBZ3</accession>